<feature type="initiator methionine" description="Removed; by host" evidence="1">
    <location>
        <position position="1"/>
    </location>
</feature>
<feature type="chain" id="PRO_0000441000" description="Protein Nef" evidence="1">
    <location>
        <begin position="2"/>
        <end position="206"/>
    </location>
</feature>
<feature type="chain" id="PRO_0000441001" description="C-terminal core protein" evidence="1">
    <location>
        <begin position="58"/>
        <end position="206"/>
    </location>
</feature>
<feature type="region of interest" description="Acidic; interacts with host PACS1 and PACS2; stabilizes the interaction of NEF/MHC-I with host AP1M1; necessary for MHC-I internalization" evidence="1">
    <location>
        <begin position="62"/>
        <end position="65"/>
    </location>
</feature>
<feature type="region of interest" description="SH3-binding; interaction with Src family tyrosine kinases" evidence="1">
    <location>
        <begin position="69"/>
        <end position="78"/>
    </location>
</feature>
<feature type="region of interest" description="Mediates dimerization, Nef-PTE1 interaction" evidence="1">
    <location>
        <begin position="108"/>
        <end position="124"/>
    </location>
</feature>
<feature type="region of interest" description="Binding to ATP6V1H" evidence="1">
    <location>
        <begin position="148"/>
        <end position="180"/>
    </location>
</feature>
<feature type="short sequence motif" description="PxxP; stabilizes the interaction of NEF/MHC-I with host AP1M1; necessary for MHC-I internalization" evidence="1">
    <location>
        <begin position="72"/>
        <end position="75"/>
    </location>
</feature>
<feature type="short sequence motif" description="Dileucine internalization motif; necessary for CD4 internalization" evidence="1">
    <location>
        <begin position="164"/>
        <end position="165"/>
    </location>
</feature>
<feature type="short sequence motif" description="Diacidic; necessary for CD4 internalization" evidence="1">
    <location>
        <begin position="174"/>
        <end position="175"/>
    </location>
</feature>
<feature type="site" description="Cleavage; by viral protease" evidence="1">
    <location>
        <begin position="57"/>
        <end position="58"/>
    </location>
</feature>
<feature type="modified residue" description="Phosphoserine; by host" evidence="1">
    <location>
        <position position="6"/>
    </location>
</feature>
<feature type="lipid moiety-binding region" description="N-myristoyl glycine; by host" evidence="1">
    <location>
        <position position="2"/>
    </location>
</feature>
<keyword id="KW-0014">AIDS</keyword>
<keyword id="KW-0053">Apoptosis</keyword>
<keyword id="KW-0244">Early protein</keyword>
<keyword id="KW-1032">Host cell membrane</keyword>
<keyword id="KW-1040">Host Golgi apparatus</keyword>
<keyword id="KW-1043">Host membrane</keyword>
<keyword id="KW-0945">Host-virus interaction</keyword>
<keyword id="KW-1080">Inhibition of host adaptive immune response by virus</keyword>
<keyword id="KW-1083">Inhibition of host autophagy by virus</keyword>
<keyword id="KW-1115">Inhibition of host MHC class I molecule presentation by virus</keyword>
<keyword id="KW-1116">Inhibition of host MHC class II molecule presentation by virus</keyword>
<keyword id="KW-0449">Lipoprotein</keyword>
<keyword id="KW-0472">Membrane</keyword>
<keyword id="KW-0519">Myristate</keyword>
<keyword id="KW-0597">Phosphoprotein</keyword>
<keyword id="KW-1185">Reference proteome</keyword>
<keyword id="KW-0964">Secreted</keyword>
<keyword id="KW-0729">SH3-binding</keyword>
<keyword id="KW-0899">Viral immunoevasion</keyword>
<keyword id="KW-0946">Virion</keyword>
<keyword id="KW-0843">Virulence</keyword>
<proteinExistence type="inferred from homology"/>
<protein>
    <recommendedName>
        <fullName evidence="1">Protein Nef</fullName>
    </recommendedName>
    <alternativeName>
        <fullName evidence="1">3'ORF</fullName>
    </alternativeName>
    <alternativeName>
        <fullName evidence="1">Negative factor</fullName>
        <shortName evidence="1">F-protein</shortName>
    </alternativeName>
    <component>
        <recommendedName>
            <fullName evidence="1">C-terminal core protein</fullName>
        </recommendedName>
    </component>
</protein>
<dbReference type="EMBL" id="DQ373063">
    <property type="protein sequence ID" value="ABD19482.1"/>
    <property type="molecule type" value="Genomic_RNA"/>
</dbReference>
<dbReference type="SMR" id="Q1A260"/>
<dbReference type="Proteomes" id="UP000009152">
    <property type="component" value="Segment"/>
</dbReference>
<dbReference type="GO" id="GO:0005576">
    <property type="term" value="C:extracellular region"/>
    <property type="evidence" value="ECO:0007669"/>
    <property type="project" value="UniProtKB-SubCell"/>
</dbReference>
<dbReference type="GO" id="GO:0044178">
    <property type="term" value="C:host cell Golgi membrane"/>
    <property type="evidence" value="ECO:0007669"/>
    <property type="project" value="UniProtKB-SubCell"/>
</dbReference>
<dbReference type="GO" id="GO:0020002">
    <property type="term" value="C:host cell plasma membrane"/>
    <property type="evidence" value="ECO:0007669"/>
    <property type="project" value="UniProtKB-SubCell"/>
</dbReference>
<dbReference type="GO" id="GO:0016020">
    <property type="term" value="C:membrane"/>
    <property type="evidence" value="ECO:0007669"/>
    <property type="project" value="UniProtKB-UniRule"/>
</dbReference>
<dbReference type="GO" id="GO:0044423">
    <property type="term" value="C:virion component"/>
    <property type="evidence" value="ECO:0007669"/>
    <property type="project" value="UniProtKB-UniRule"/>
</dbReference>
<dbReference type="GO" id="GO:0005525">
    <property type="term" value="F:GTP binding"/>
    <property type="evidence" value="ECO:0007669"/>
    <property type="project" value="UniProtKB-UniRule"/>
</dbReference>
<dbReference type="GO" id="GO:0017124">
    <property type="term" value="F:SH3 domain binding"/>
    <property type="evidence" value="ECO:0007669"/>
    <property type="project" value="UniProtKB-UniRule"/>
</dbReference>
<dbReference type="GO" id="GO:0046776">
    <property type="term" value="P:symbiont-mediated suppression of host antigen processing and presentation of peptide antigen via MHC class I"/>
    <property type="evidence" value="ECO:0007669"/>
    <property type="project" value="UniProtKB-UniRule"/>
</dbReference>
<dbReference type="GO" id="GO:0039505">
    <property type="term" value="P:symbiont-mediated suppression of host antigen processing and presentation of peptide antigen via MHC class II"/>
    <property type="evidence" value="ECO:0007669"/>
    <property type="project" value="UniProtKB-UniRule"/>
</dbReference>
<dbReference type="GO" id="GO:0140321">
    <property type="term" value="P:symbiont-mediated suppression of host autophagy"/>
    <property type="evidence" value="ECO:0007669"/>
    <property type="project" value="UniProtKB-KW"/>
</dbReference>
<dbReference type="Gene3D" id="4.10.890.10">
    <property type="entry name" value="HIV 1 nef anchor domain"/>
    <property type="match status" value="1"/>
</dbReference>
<dbReference type="Gene3D" id="3.30.62.10">
    <property type="entry name" value="Nef Regulatory Factor"/>
    <property type="match status" value="1"/>
</dbReference>
<dbReference type="HAMAP" id="MF_04078">
    <property type="entry name" value="NEF_HIV"/>
    <property type="match status" value="1"/>
</dbReference>
<dbReference type="InterPro" id="IPR027480">
    <property type="entry name" value="HIV-1_Nef_anchor_sf"/>
</dbReference>
<dbReference type="InterPro" id="IPR027481">
    <property type="entry name" value="HIV-1_Nef_core_sf"/>
</dbReference>
<dbReference type="InterPro" id="IPR001558">
    <property type="entry name" value="HIV_Nef"/>
</dbReference>
<dbReference type="Pfam" id="PF00469">
    <property type="entry name" value="F-protein"/>
    <property type="match status" value="1"/>
</dbReference>
<dbReference type="SUPFAM" id="SSF55671">
    <property type="entry name" value="Regulatory factor Nef"/>
    <property type="match status" value="1"/>
</dbReference>
<sequence>MGGKWSKSSLVGWPEVRDRLRRTQTAAEGVGPVSRDLARHGAITSRNTSQTNETLAWLEEVQNEEVGFPVRPQVPLRPMTFKGAFDLSHFLKEKGGLEGLVYSKKRQEILDLWVYHTQGFFPDWQNYTPGPGIRYPLTFGWCFKLVPLEPEEVERANEGDNNILLHPICQHGQEDEAREVLVWTFDSRLALKHRARELHPEYYKDC</sequence>
<organism>
    <name type="scientific">Simian immunodeficiency virus (isolate MB66)</name>
    <name type="common">SIV-cpz</name>
    <name type="synonym">Chimpanzee immunodeficiency virus</name>
    <dbReference type="NCBI Taxonomy" id="388911"/>
    <lineage>
        <taxon>Viruses</taxon>
        <taxon>Riboviria</taxon>
        <taxon>Pararnavirae</taxon>
        <taxon>Artverviricota</taxon>
        <taxon>Revtraviricetes</taxon>
        <taxon>Ortervirales</taxon>
        <taxon>Retroviridae</taxon>
        <taxon>Orthoretrovirinae</taxon>
        <taxon>Lentivirus</taxon>
        <taxon>Simian immunodeficiency virus</taxon>
    </lineage>
</organism>
<name>NEF_SIVMB</name>
<comment type="function">
    <text evidence="1">Factor of infectivity and pathogenicity, required for optimal virus replication. Alters numerous pathways of T-lymphocyte function and down-regulates immunity surface molecules in order to evade host defense and increase viral infectivity. Alters the functionality of other immunity cells, like dendritic cells, monocytes/macrophages and NK cells.</text>
</comment>
<comment type="function">
    <text evidence="1">In infected CD4(+) T-lymphocytes, down-regulates the surface MHC-I, mature MHC-II, CD4, CD28, CCR5 and CXCR4 molecules. Mediates internalization and degradation of host CD4 through the interaction of with the cytoplasmic tail of CD4, the recruitment of AP-2 (clathrin adapter protein complex 2), internalization through clathrin coated pits, and subsequent transport to endosomes and lysosomes for degradation. Diverts host MHC-I molecules to the trans-Golgi network-associated endosomal compartments by an endocytic pathway to finally target them for degradation. MHC-I down-regulation may involve AP-1 (clathrin adapter protein complex 1) or possibly Src family kinase-ZAP70/Syk-PI3K cascade recruited by PACS2. In consequence infected cells are masked for immune recognition by cytotoxic T-lymphocytes. Decreasing the number of immune receptors also prevents reinfection by more HIV particles (superinfection). Down-regulates host SERINC3 and SERINC5 thereby excluding these proteins from the viral particles. Virion infectivity is drastically higher when SERINC3 or SERINC5 are excluded from the viral envelope, because these host antiviral proteins impair the membrane fusion event necessary for subsequent virion penetration.</text>
</comment>
<comment type="function">
    <text evidence="1">Bypasses host T-cell signaling by inducing a transcriptional program nearly identical to that of anti-CD3 cell activation. Interaction with TCR-zeta chain up-regulates the Fas ligand (FasL). Increasing surface FasL molecules and decreasing surface MHC-I molecules on infected CD4(+) cells send attacking cytotoxic CD8+ T-lymphocytes into apoptosis.</text>
</comment>
<comment type="function">
    <text evidence="1">Plays a role in optimizing the host cell environment for viral replication without causing cell death by apoptosis. Protects the infected cells from apoptosis in order to keep them alive until the next virus generation is ready to strike. Inhibits the Fas and TNFR-mediated death signals by blocking MAP3K5/ASK1. Decreases the half-life of TP53, protecting the infected cell against p53-mediated apoptosis. Inhibits the apoptotic signals regulated by the Bcl-2 family proteins through the formation of a Nef/PI3-kinase/PAK2 complex that leads to activation of PAK2 and induces phosphorylation of host BAD.</text>
</comment>
<comment type="function">
    <text evidence="1">Extracellular Nef protein targets CD4(+) T-lymphocytes for apoptosis by interacting with CXCR4 surface receptors.</text>
</comment>
<comment type="subunit">
    <text evidence="1">Monomer; cytosolic form. Homodimer; membrane bound form. Interacts with Nef associated p21-activated kinase (PAK2); this interaction activates PAK2. Associates with the Nef-MHC-I-AP1 complex; this complex is required for MHC-I internalization. Interacts (via C-terminus) with host PI3-kinase. Interacts with host PACS1; this interaction seems to be weak. Interacts with host PACS2. Interacts with host LCK and MAPK3; these interactions inhibit the kinase activity of the latter. Interacts with host ATP6V1H; this interaction may play a role in CD4 endocytosis. Associates with the CD4-Nef-AP2 complex; this complex is required for CD4 internalization. Interacts with host AP2 subunit alpha and AP2 subunit sigma2. Interacts with TCR-zeta chain; this interaction up-regulates the Fas ligand (FasL) surface expression. Interacts with host HCK, LYN, and SRC; these interactions activate the Src family kinases. Interacts with MAP3K5; this interaction inhibits the Fas and TNFR-mediated death signals. Interacts with beta-COP and PTE1. Interacts with human RACK1; this increases Nef phosphorylation by PKC. Interacts with TP53; this interaction decreases the half-life of TP53, protecting the infected cell against p53-mediated apoptosis.</text>
</comment>
<comment type="subcellular location">
    <subcellularLocation>
        <location evidence="1">Host cell membrane</location>
        <topology evidence="1">Lipid-anchor</topology>
        <orientation evidence="1">Cytoplasmic side</orientation>
    </subcellularLocation>
    <subcellularLocation>
        <location evidence="1">Virion</location>
    </subcellularLocation>
    <subcellularLocation>
        <location evidence="1">Secreted</location>
    </subcellularLocation>
    <subcellularLocation>
        <location evidence="1">Host Golgi apparatus membrane</location>
    </subcellularLocation>
    <text evidence="1">TGN localization requires PACS1. Associates with the inner plasma membrane through its N-terminal domain. Nef stimulates its own export via the release of exosomes. Incorporated in virions at a rate of about 10 molecules per virion, where it is cleaved.</text>
</comment>
<comment type="induction">
    <text evidence="1">Expressed early in the viral replication cycle.</text>
</comment>
<comment type="domain">
    <text evidence="1">The N-terminal domain is composed of the N-myristoyl glycine and of a cluster of positively charged amino acids. It is required for inner plasma membrane targeting of Nef and virion incorporation, and thereby for infectivity. This domain is also involved in binding to TP53.</text>
</comment>
<comment type="domain">
    <text evidence="1">The SH3-binding domain constituted of PxxP motifs mediates binding to several Src family proteins thereby regulating their tyrosine kinase activity. The same motifs also mediates the association with MAPK3, PI3-kinase and TCR-zeta.</text>
</comment>
<comment type="domain">
    <text evidence="1">The dileucine internalization motif and a diacidic motif seem to be required for binding to AP-2.</text>
</comment>
<comment type="domain">
    <text evidence="1">The acidic region binds to the sorting protein PACS-2, which targets Nef to the paranuclear region, enabling the PxxP motif to direct assembly of an SFK/ZAP-70/PI3K complex that accelerates endocytosis of cell-surface MHC-I.</text>
</comment>
<comment type="PTM">
    <text evidence="1">The virion-associated Nef proteins are cleaved by the viral protease to release the soluble C-terminal core protein. Nef is probably cleaved concomitantly with viral structural proteins on maturation of virus particles.</text>
</comment>
<comment type="PTM">
    <text evidence="1">Myristoylated.</text>
</comment>
<comment type="PTM">
    <text evidence="1">Phosphorylated on serine residues, probably by host PKCdelta and theta.</text>
</comment>
<comment type="miscellaneous">
    <text evidence="1">HIV-1 lineages are divided in three main groups, M (for Major), O (for Outlier), and N (for New, or Non-M, Non-O). The vast majority of strains found worldwide belong to the group M. Group O seems to be endemic to and largely confined to Cameroon and neighboring countries in West Central Africa, where these viruses represent a small minority of HIV-1 strains. The group N is represented by a limited number of isolates from Cameroonian persons. The group M is further subdivided in 9 clades or subtypes (A to D, F to H, J and K).</text>
</comment>
<comment type="similarity">
    <text evidence="1">Belongs to the lentivirus primate group Nef protein family.</text>
</comment>
<accession>Q1A260</accession>
<reference key="1">
    <citation type="journal article" date="2006" name="Science">
        <title>Chimpanzee reservoirs of pandemic and nonpandemic HIV-1.</title>
        <authorList>
            <person name="Keele B.F."/>
            <person name="Van Heuverswyn F."/>
            <person name="Li Y."/>
            <person name="Bailes E."/>
            <person name="Takehisa J."/>
            <person name="Santiago M.L."/>
            <person name="Bibollet-Ruche F."/>
            <person name="Chen Y."/>
            <person name="Wain L.V."/>
            <person name="Liegeois F."/>
            <person name="Loul S."/>
            <person name="Ngole E.M."/>
            <person name="Bienvenue Y."/>
            <person name="Delaporte E."/>
            <person name="Brookfield J.F."/>
            <person name="Sharp P.M."/>
            <person name="Shaw G.M."/>
            <person name="Peeters M."/>
            <person name="Hahn B.H."/>
        </authorList>
    </citation>
    <scope>NUCLEOTIDE SEQUENCE [GENOMIC RNA]</scope>
</reference>
<evidence type="ECO:0000255" key="1">
    <source>
        <dbReference type="HAMAP-Rule" id="MF_04078"/>
    </source>
</evidence>
<organismHost>
    <name type="scientific">Pan troglodytes</name>
    <name type="common">Chimpanzee</name>
    <dbReference type="NCBI Taxonomy" id="9598"/>
</organismHost>
<gene>
    <name evidence="1" type="primary">nef</name>
</gene>